<feature type="initiator methionine" description="Removed" evidence="1">
    <location>
        <position position="1"/>
    </location>
</feature>
<feature type="chain" id="PRO_0000070521" description="Photosystem II reaction center protein H">
    <location>
        <begin position="2"/>
        <end position="73"/>
    </location>
</feature>
<feature type="transmembrane region" description="Helical" evidence="2">
    <location>
        <begin position="41"/>
        <end position="61"/>
    </location>
</feature>
<feature type="region of interest" description="Disordered" evidence="3">
    <location>
        <begin position="1"/>
        <end position="20"/>
    </location>
</feature>
<feature type="modified residue" description="Phosphothreonine" evidence="2">
    <location>
        <position position="3"/>
    </location>
</feature>
<feature type="modified residue" description="Phosphothreonine" evidence="2">
    <location>
        <position position="5"/>
    </location>
</feature>
<reference key="1">
    <citation type="journal article" date="1990" name="Nucleic Acids Res.">
        <title>Nucleotide sequences of psbB and psbH, the plastid encoded genes for CP47 and the 10 kDa phosphoprotein of photosystem II in Oenothera hookeri and argillicola.</title>
        <authorList>
            <person name="Offermann-Steinhard K."/>
            <person name="Herrmann R.G."/>
        </authorList>
    </citation>
    <scope>NUCLEOTIDE SEQUENCE [GENOMIC DNA]</scope>
</reference>
<reference key="2">
    <citation type="journal article" date="2008" name="Nucleic Acids Res.">
        <title>The complete nucleotide sequences of the five genetically distinct plastid genomes of Oenothera, subsection Oenothera: I. Sequence evaluation and plastome evolution.</title>
        <authorList>
            <person name="Greiner S."/>
            <person name="Wang X."/>
            <person name="Rauwolf U."/>
            <person name="Silber M.V."/>
            <person name="Mayer K."/>
            <person name="Meurer J."/>
            <person name="Haberer G."/>
            <person name="Herrmann R.G."/>
        </authorList>
    </citation>
    <scope>NUCLEOTIDE SEQUENCE [LARGE SCALE GENOMIC DNA]</scope>
    <source>
        <strain>cv. Douthat 1</strain>
    </source>
</reference>
<geneLocation type="chloroplast"/>
<sequence length="73" mass="7729">MATQTAEESSRARPKKTGLGGLLKPLNSEYGKVAPGWGTTPLMGLAMALFAVFLSIILEIYNSSVLLDGISMN</sequence>
<keyword id="KW-0150">Chloroplast</keyword>
<keyword id="KW-0472">Membrane</keyword>
<keyword id="KW-0597">Phosphoprotein</keyword>
<keyword id="KW-0602">Photosynthesis</keyword>
<keyword id="KW-0604">Photosystem II</keyword>
<keyword id="KW-0934">Plastid</keyword>
<keyword id="KW-0793">Thylakoid</keyword>
<keyword id="KW-0812">Transmembrane</keyword>
<keyword id="KW-1133">Transmembrane helix</keyword>
<gene>
    <name evidence="2" type="primary">psbH</name>
</gene>
<proteinExistence type="inferred from homology"/>
<comment type="function">
    <text evidence="2">One of the components of the core complex of photosystem II (PSII), required for its stability and/or assembly. PSII is a light-driven water:plastoquinone oxidoreductase that uses light energy to abstract electrons from H(2)O, generating O(2) and a proton gradient subsequently used for ATP formation. It consists of a core antenna complex that captures photons, and an electron transfer chain that converts photonic excitation into a charge separation.</text>
</comment>
<comment type="subunit">
    <text evidence="2">PSII is composed of 1 copy each of membrane proteins PsbA, PsbB, PsbC, PsbD, PsbE, PsbF, PsbH, PsbI, PsbJ, PsbK, PsbL, PsbM, PsbT, PsbX, PsbY, PsbZ, Psb30/Ycf12, at least 3 peripheral proteins of the oxygen-evolving complex and a large number of cofactors. It forms dimeric complexes.</text>
</comment>
<comment type="subcellular location">
    <subcellularLocation>
        <location evidence="2">Plastid</location>
        <location evidence="2">Chloroplast thylakoid membrane</location>
        <topology evidence="2">Single-pass membrane protein</topology>
    </subcellularLocation>
</comment>
<comment type="PTM">
    <text evidence="2">Phosphorylation is a light-dependent reaction catalyzed by a membrane-bound kinase; phosphorylation occurs on Thr residue(s) in the N-terminus of the protein.</text>
</comment>
<comment type="similarity">
    <text evidence="2">Belongs to the PsbH family.</text>
</comment>
<evidence type="ECO:0000250" key="1">
    <source>
        <dbReference type="UniProtKB" id="P56780"/>
    </source>
</evidence>
<evidence type="ECO:0000255" key="2">
    <source>
        <dbReference type="HAMAP-Rule" id="MF_00752"/>
    </source>
</evidence>
<evidence type="ECO:0000256" key="3">
    <source>
        <dbReference type="SAM" id="MobiDB-lite"/>
    </source>
</evidence>
<accession>P69552</accession>
<accession>B0Z4Q5</accession>
<accession>P19820</accession>
<name>PSBH_OENAR</name>
<protein>
    <recommendedName>
        <fullName evidence="2">Photosystem II reaction center protein H</fullName>
        <shortName evidence="2">PSII-H</shortName>
    </recommendedName>
    <alternativeName>
        <fullName evidence="2">Photosystem II 10 kDa phosphoprotein</fullName>
    </alternativeName>
</protein>
<dbReference type="EMBL" id="X55899">
    <property type="protein sequence ID" value="CAA39390.1"/>
    <property type="molecule type" value="Genomic_DNA"/>
</dbReference>
<dbReference type="EMBL" id="EU262887">
    <property type="protein sequence ID" value="ABW98733.1"/>
    <property type="molecule type" value="Genomic_DNA"/>
</dbReference>
<dbReference type="PIR" id="S12131">
    <property type="entry name" value="S12131"/>
</dbReference>
<dbReference type="RefSeq" id="YP_001687166.1">
    <property type="nucleotide sequence ID" value="NC_010358.2"/>
</dbReference>
<dbReference type="SMR" id="P69552"/>
<dbReference type="GeneID" id="5951898"/>
<dbReference type="GO" id="GO:0009535">
    <property type="term" value="C:chloroplast thylakoid membrane"/>
    <property type="evidence" value="ECO:0007669"/>
    <property type="project" value="UniProtKB-SubCell"/>
</dbReference>
<dbReference type="GO" id="GO:0009523">
    <property type="term" value="C:photosystem II"/>
    <property type="evidence" value="ECO:0007669"/>
    <property type="project" value="UniProtKB-KW"/>
</dbReference>
<dbReference type="GO" id="GO:0042301">
    <property type="term" value="F:phosphate ion binding"/>
    <property type="evidence" value="ECO:0007669"/>
    <property type="project" value="InterPro"/>
</dbReference>
<dbReference type="GO" id="GO:0015979">
    <property type="term" value="P:photosynthesis"/>
    <property type="evidence" value="ECO:0007669"/>
    <property type="project" value="UniProtKB-UniRule"/>
</dbReference>
<dbReference type="GO" id="GO:0050821">
    <property type="term" value="P:protein stabilization"/>
    <property type="evidence" value="ECO:0007669"/>
    <property type="project" value="InterPro"/>
</dbReference>
<dbReference type="Gene3D" id="1.20.5.880">
    <property type="entry name" value="Photosystem II reaction center protein H"/>
    <property type="match status" value="1"/>
</dbReference>
<dbReference type="HAMAP" id="MF_00752">
    <property type="entry name" value="PSII_PsbH"/>
    <property type="match status" value="1"/>
</dbReference>
<dbReference type="InterPro" id="IPR001056">
    <property type="entry name" value="PSII_PsbH"/>
</dbReference>
<dbReference type="InterPro" id="IPR036863">
    <property type="entry name" value="PSII_PsbH_sf"/>
</dbReference>
<dbReference type="NCBIfam" id="NF002728">
    <property type="entry name" value="PRK02624.1"/>
    <property type="match status" value="1"/>
</dbReference>
<dbReference type="PANTHER" id="PTHR34469">
    <property type="entry name" value="PHOTOSYSTEM II REACTION CENTER PROTEIN H"/>
    <property type="match status" value="1"/>
</dbReference>
<dbReference type="PANTHER" id="PTHR34469:SF4">
    <property type="entry name" value="PHOTOSYSTEM II REACTION CENTER PROTEIN H"/>
    <property type="match status" value="1"/>
</dbReference>
<dbReference type="Pfam" id="PF00737">
    <property type="entry name" value="PsbH"/>
    <property type="match status" value="1"/>
</dbReference>
<dbReference type="SUPFAM" id="SSF161025">
    <property type="entry name" value="Photosystem II 10 kDa phosphoprotein PsbH"/>
    <property type="match status" value="1"/>
</dbReference>
<organism>
    <name type="scientific">Oenothera argillicola</name>
    <name type="common">Appalachian evening primrose</name>
    <dbReference type="NCBI Taxonomy" id="3940"/>
    <lineage>
        <taxon>Eukaryota</taxon>
        <taxon>Viridiplantae</taxon>
        <taxon>Streptophyta</taxon>
        <taxon>Embryophyta</taxon>
        <taxon>Tracheophyta</taxon>
        <taxon>Spermatophyta</taxon>
        <taxon>Magnoliopsida</taxon>
        <taxon>eudicotyledons</taxon>
        <taxon>Gunneridae</taxon>
        <taxon>Pentapetalae</taxon>
        <taxon>rosids</taxon>
        <taxon>malvids</taxon>
        <taxon>Myrtales</taxon>
        <taxon>Onagraceae</taxon>
        <taxon>Onagroideae</taxon>
        <taxon>Onagreae</taxon>
        <taxon>Oenothera</taxon>
    </lineage>
</organism>